<evidence type="ECO:0000255" key="1">
    <source>
        <dbReference type="HAMAP-Rule" id="MF_00416"/>
    </source>
</evidence>
<proteinExistence type="inferred from homology"/>
<sequence>MNLSSLPHRLLAAAVALCAIAAPASAERIKDLAQVGGVRGNALVGYGLVVGLDGSGDRTSQAPFTVQSLKNLLGELGVNVPANVNPQLKNVAAVAIHAELPPFAKPGQPIDITVSSIANAVSLRGGSLLMAPLKGADGQVYAMAQGNLVVGGFGAQGKDGSRVSVNIPSVGRIPNGATVERALPDVFAGSGEITLNLHQNDFTTVSRMVAAIDNSFGAGTARAVDGVTVSVRSPTDPSARIGLLARLENVELSPGDAPAKVVVNARTGTVVIGQLVRVMPAAIAHGSLTVTISENTNVSQPGAFSGGRTAVTPQSTIKATSEGSRMFKFEGGTTLDQIVRAVNEVGAAPGDLVAILEALKQAGALTAELEVI</sequence>
<gene>
    <name evidence="1" type="primary">flgI</name>
    <name type="ordered locus">XCC1945</name>
</gene>
<keyword id="KW-0975">Bacterial flagellum</keyword>
<keyword id="KW-0574">Periplasm</keyword>
<keyword id="KW-1185">Reference proteome</keyword>
<keyword id="KW-0732">Signal</keyword>
<accession>Q8P9C0</accession>
<feature type="signal peptide" evidence="1">
    <location>
        <begin position="1"/>
        <end position="26"/>
    </location>
</feature>
<feature type="chain" id="PRO_0000009532" description="Flagellar P-ring protein">
    <location>
        <begin position="27"/>
        <end position="372"/>
    </location>
</feature>
<reference key="1">
    <citation type="journal article" date="2002" name="Nature">
        <title>Comparison of the genomes of two Xanthomonas pathogens with differing host specificities.</title>
        <authorList>
            <person name="da Silva A.C.R."/>
            <person name="Ferro J.A."/>
            <person name="Reinach F.C."/>
            <person name="Farah C.S."/>
            <person name="Furlan L.R."/>
            <person name="Quaggio R.B."/>
            <person name="Monteiro-Vitorello C.B."/>
            <person name="Van Sluys M.A."/>
            <person name="Almeida N.F. Jr."/>
            <person name="Alves L.M.C."/>
            <person name="do Amaral A.M."/>
            <person name="Bertolini M.C."/>
            <person name="Camargo L.E.A."/>
            <person name="Camarotte G."/>
            <person name="Cannavan F."/>
            <person name="Cardozo J."/>
            <person name="Chambergo F."/>
            <person name="Ciapina L.P."/>
            <person name="Cicarelli R.M.B."/>
            <person name="Coutinho L.L."/>
            <person name="Cursino-Santos J.R."/>
            <person name="El-Dorry H."/>
            <person name="Faria J.B."/>
            <person name="Ferreira A.J.S."/>
            <person name="Ferreira R.C.C."/>
            <person name="Ferro M.I.T."/>
            <person name="Formighieri E.F."/>
            <person name="Franco M.C."/>
            <person name="Greggio C.C."/>
            <person name="Gruber A."/>
            <person name="Katsuyama A.M."/>
            <person name="Kishi L.T."/>
            <person name="Leite R.P."/>
            <person name="Lemos E.G.M."/>
            <person name="Lemos M.V.F."/>
            <person name="Locali E.C."/>
            <person name="Machado M.A."/>
            <person name="Madeira A.M.B.N."/>
            <person name="Martinez-Rossi N.M."/>
            <person name="Martins E.C."/>
            <person name="Meidanis J."/>
            <person name="Menck C.F.M."/>
            <person name="Miyaki C.Y."/>
            <person name="Moon D.H."/>
            <person name="Moreira L.M."/>
            <person name="Novo M.T.M."/>
            <person name="Okura V.K."/>
            <person name="Oliveira M.C."/>
            <person name="Oliveira V.R."/>
            <person name="Pereira H.A."/>
            <person name="Rossi A."/>
            <person name="Sena J.A.D."/>
            <person name="Silva C."/>
            <person name="de Souza R.F."/>
            <person name="Spinola L.A.F."/>
            <person name="Takita M.A."/>
            <person name="Tamura R.E."/>
            <person name="Teixeira E.C."/>
            <person name="Tezza R.I.D."/>
            <person name="Trindade dos Santos M."/>
            <person name="Truffi D."/>
            <person name="Tsai S.M."/>
            <person name="White F.F."/>
            <person name="Setubal J.C."/>
            <person name="Kitajima J.P."/>
        </authorList>
    </citation>
    <scope>NUCLEOTIDE SEQUENCE [LARGE SCALE GENOMIC DNA]</scope>
    <source>
        <strain>ATCC 33913 / DSM 3586 / NCPPB 528 / LMG 568 / P 25</strain>
    </source>
</reference>
<organism>
    <name type="scientific">Xanthomonas campestris pv. campestris (strain ATCC 33913 / DSM 3586 / NCPPB 528 / LMG 568 / P 25)</name>
    <dbReference type="NCBI Taxonomy" id="190485"/>
    <lineage>
        <taxon>Bacteria</taxon>
        <taxon>Pseudomonadati</taxon>
        <taxon>Pseudomonadota</taxon>
        <taxon>Gammaproteobacteria</taxon>
        <taxon>Lysobacterales</taxon>
        <taxon>Lysobacteraceae</taxon>
        <taxon>Xanthomonas</taxon>
    </lineage>
</organism>
<dbReference type="EMBL" id="AE008922">
    <property type="protein sequence ID" value="AAM41234.1"/>
    <property type="molecule type" value="Genomic_DNA"/>
</dbReference>
<dbReference type="RefSeq" id="NP_637310.1">
    <property type="nucleotide sequence ID" value="NC_003902.1"/>
</dbReference>
<dbReference type="RefSeq" id="WP_011037110.1">
    <property type="nucleotide sequence ID" value="NC_003902.1"/>
</dbReference>
<dbReference type="SMR" id="Q8P9C0"/>
<dbReference type="STRING" id="190485.XCC1945"/>
<dbReference type="EnsemblBacteria" id="AAM41234">
    <property type="protein sequence ID" value="AAM41234"/>
    <property type="gene ID" value="XCC1945"/>
</dbReference>
<dbReference type="KEGG" id="xcc:XCC1945"/>
<dbReference type="PATRIC" id="fig|190485.4.peg.2079"/>
<dbReference type="eggNOG" id="COG1706">
    <property type="taxonomic scope" value="Bacteria"/>
</dbReference>
<dbReference type="HOGENOM" id="CLU_045235_1_0_6"/>
<dbReference type="OrthoDB" id="9786431at2"/>
<dbReference type="Proteomes" id="UP000001010">
    <property type="component" value="Chromosome"/>
</dbReference>
<dbReference type="GO" id="GO:0009428">
    <property type="term" value="C:bacterial-type flagellum basal body, distal rod, P ring"/>
    <property type="evidence" value="ECO:0000318"/>
    <property type="project" value="GO_Central"/>
</dbReference>
<dbReference type="GO" id="GO:0030288">
    <property type="term" value="C:outer membrane-bounded periplasmic space"/>
    <property type="evidence" value="ECO:0007669"/>
    <property type="project" value="InterPro"/>
</dbReference>
<dbReference type="GO" id="GO:0005198">
    <property type="term" value="F:structural molecule activity"/>
    <property type="evidence" value="ECO:0007669"/>
    <property type="project" value="InterPro"/>
</dbReference>
<dbReference type="GO" id="GO:0071973">
    <property type="term" value="P:bacterial-type flagellum-dependent cell motility"/>
    <property type="evidence" value="ECO:0000318"/>
    <property type="project" value="GO_Central"/>
</dbReference>
<dbReference type="HAMAP" id="MF_00416">
    <property type="entry name" value="FlgI"/>
    <property type="match status" value="1"/>
</dbReference>
<dbReference type="InterPro" id="IPR001782">
    <property type="entry name" value="Flag_FlgI"/>
</dbReference>
<dbReference type="NCBIfam" id="NF003676">
    <property type="entry name" value="PRK05303.1"/>
    <property type="match status" value="1"/>
</dbReference>
<dbReference type="PANTHER" id="PTHR30381">
    <property type="entry name" value="FLAGELLAR P-RING PERIPLASMIC PROTEIN FLGI"/>
    <property type="match status" value="1"/>
</dbReference>
<dbReference type="PANTHER" id="PTHR30381:SF0">
    <property type="entry name" value="FLAGELLAR P-RING PROTEIN"/>
    <property type="match status" value="1"/>
</dbReference>
<dbReference type="Pfam" id="PF02119">
    <property type="entry name" value="FlgI"/>
    <property type="match status" value="1"/>
</dbReference>
<dbReference type="PRINTS" id="PR01010">
    <property type="entry name" value="FLGPRINGFLGI"/>
</dbReference>
<comment type="function">
    <text evidence="1">Assembles around the rod to form the L-ring and probably protects the motor/basal body from shearing forces during rotation.</text>
</comment>
<comment type="subunit">
    <text evidence="1">The basal body constitutes a major portion of the flagellar organelle and consists of four rings (L,P,S, and M) mounted on a central rod.</text>
</comment>
<comment type="subcellular location">
    <subcellularLocation>
        <location evidence="1">Periplasm</location>
    </subcellularLocation>
    <subcellularLocation>
        <location evidence="1">Bacterial flagellum basal body</location>
    </subcellularLocation>
</comment>
<comment type="similarity">
    <text evidence="1">Belongs to the FlgI family.</text>
</comment>
<name>FLGI_XANCP</name>
<protein>
    <recommendedName>
        <fullName evidence="1">Flagellar P-ring protein</fullName>
    </recommendedName>
    <alternativeName>
        <fullName evidence="1">Basal body P-ring protein</fullName>
    </alternativeName>
</protein>